<accession>B1J060</accession>
<name>AROL_ECOLC</name>
<organism>
    <name type="scientific">Escherichia coli (strain ATCC 8739 / DSM 1576 / NBRC 3972 / NCIMB 8545 / WDCM 00012 / Crooks)</name>
    <dbReference type="NCBI Taxonomy" id="481805"/>
    <lineage>
        <taxon>Bacteria</taxon>
        <taxon>Pseudomonadati</taxon>
        <taxon>Pseudomonadota</taxon>
        <taxon>Gammaproteobacteria</taxon>
        <taxon>Enterobacterales</taxon>
        <taxon>Enterobacteriaceae</taxon>
        <taxon>Escherichia</taxon>
    </lineage>
</organism>
<proteinExistence type="inferred from homology"/>
<gene>
    <name evidence="1" type="primary">aroL</name>
    <name type="ordered locus">EcolC_3244</name>
</gene>
<comment type="function">
    <text evidence="1">Catalyzes the specific phosphorylation of the 3-hydroxyl group of shikimic acid using ATP as a cosubstrate.</text>
</comment>
<comment type="catalytic activity">
    <reaction evidence="1">
        <text>shikimate + ATP = 3-phosphoshikimate + ADP + H(+)</text>
        <dbReference type="Rhea" id="RHEA:13121"/>
        <dbReference type="ChEBI" id="CHEBI:15378"/>
        <dbReference type="ChEBI" id="CHEBI:30616"/>
        <dbReference type="ChEBI" id="CHEBI:36208"/>
        <dbReference type="ChEBI" id="CHEBI:145989"/>
        <dbReference type="ChEBI" id="CHEBI:456216"/>
        <dbReference type="EC" id="2.7.1.71"/>
    </reaction>
</comment>
<comment type="cofactor">
    <cofactor evidence="1">
        <name>Mg(2+)</name>
        <dbReference type="ChEBI" id="CHEBI:18420"/>
    </cofactor>
    <text evidence="1">Binds 1 Mg(2+) ion per subunit.</text>
</comment>
<comment type="pathway">
    <text evidence="1">Metabolic intermediate biosynthesis; chorismate biosynthesis; chorismate from D-erythrose 4-phosphate and phosphoenolpyruvate: step 5/7.</text>
</comment>
<comment type="subunit">
    <text evidence="1">Monomer.</text>
</comment>
<comment type="subcellular location">
    <subcellularLocation>
        <location evidence="1">Cytoplasm</location>
    </subcellularLocation>
</comment>
<comment type="domain">
    <text evidence="1">The LID domain closes over the active site upon ATP binding.</text>
</comment>
<comment type="similarity">
    <text evidence="1">Belongs to the shikimate kinase family. AroL subfamily.</text>
</comment>
<feature type="chain" id="PRO_1000085828" description="Shikimate kinase 2">
    <location>
        <begin position="1"/>
        <end position="174"/>
    </location>
</feature>
<feature type="region of interest" description="LID domain">
    <location>
        <begin position="112"/>
        <end position="126"/>
    </location>
</feature>
<feature type="binding site" evidence="1">
    <location>
        <begin position="12"/>
        <end position="17"/>
    </location>
    <ligand>
        <name>ATP</name>
        <dbReference type="ChEBI" id="CHEBI:30616"/>
    </ligand>
</feature>
<feature type="binding site" evidence="1">
    <location>
        <position position="16"/>
    </location>
    <ligand>
        <name>Mg(2+)</name>
        <dbReference type="ChEBI" id="CHEBI:18420"/>
    </ligand>
</feature>
<feature type="binding site" evidence="1">
    <location>
        <position position="32"/>
    </location>
    <ligand>
        <name>Mg(2+)</name>
        <dbReference type="ChEBI" id="CHEBI:18420"/>
    </ligand>
</feature>
<feature type="binding site" evidence="1">
    <location>
        <position position="34"/>
    </location>
    <ligand>
        <name>substrate</name>
    </ligand>
</feature>
<feature type="binding site" evidence="1">
    <location>
        <position position="58"/>
    </location>
    <ligand>
        <name>substrate</name>
    </ligand>
</feature>
<feature type="binding site" evidence="1">
    <location>
        <position position="79"/>
    </location>
    <ligand>
        <name>substrate</name>
    </ligand>
</feature>
<feature type="binding site" evidence="1">
    <location>
        <position position="120"/>
    </location>
    <ligand>
        <name>ATP</name>
        <dbReference type="ChEBI" id="CHEBI:30616"/>
    </ligand>
</feature>
<feature type="binding site" evidence="1">
    <location>
        <position position="139"/>
    </location>
    <ligand>
        <name>substrate</name>
    </ligand>
</feature>
<dbReference type="EC" id="2.7.1.71" evidence="1"/>
<dbReference type="EMBL" id="CP000946">
    <property type="protein sequence ID" value="ACA78866.1"/>
    <property type="molecule type" value="Genomic_DNA"/>
</dbReference>
<dbReference type="RefSeq" id="WP_000193393.1">
    <property type="nucleotide sequence ID" value="NZ_MTFT01000010.1"/>
</dbReference>
<dbReference type="SMR" id="B1J060"/>
<dbReference type="GeneID" id="93777073"/>
<dbReference type="KEGG" id="ecl:EcolC_3244"/>
<dbReference type="HOGENOM" id="CLU_057607_4_3_6"/>
<dbReference type="UniPathway" id="UPA00053">
    <property type="reaction ID" value="UER00088"/>
</dbReference>
<dbReference type="GO" id="GO:0005829">
    <property type="term" value="C:cytosol"/>
    <property type="evidence" value="ECO:0007669"/>
    <property type="project" value="TreeGrafter"/>
</dbReference>
<dbReference type="GO" id="GO:0005524">
    <property type="term" value="F:ATP binding"/>
    <property type="evidence" value="ECO:0007669"/>
    <property type="project" value="UniProtKB-UniRule"/>
</dbReference>
<dbReference type="GO" id="GO:0000287">
    <property type="term" value="F:magnesium ion binding"/>
    <property type="evidence" value="ECO:0007669"/>
    <property type="project" value="UniProtKB-UniRule"/>
</dbReference>
<dbReference type="GO" id="GO:0004765">
    <property type="term" value="F:shikimate kinase activity"/>
    <property type="evidence" value="ECO:0007669"/>
    <property type="project" value="UniProtKB-UniRule"/>
</dbReference>
<dbReference type="GO" id="GO:0008652">
    <property type="term" value="P:amino acid biosynthetic process"/>
    <property type="evidence" value="ECO:0007669"/>
    <property type="project" value="UniProtKB-KW"/>
</dbReference>
<dbReference type="GO" id="GO:0009073">
    <property type="term" value="P:aromatic amino acid family biosynthetic process"/>
    <property type="evidence" value="ECO:0007669"/>
    <property type="project" value="UniProtKB-KW"/>
</dbReference>
<dbReference type="GO" id="GO:0009423">
    <property type="term" value="P:chorismate biosynthetic process"/>
    <property type="evidence" value="ECO:0007669"/>
    <property type="project" value="UniProtKB-UniRule"/>
</dbReference>
<dbReference type="CDD" id="cd00464">
    <property type="entry name" value="SK"/>
    <property type="match status" value="1"/>
</dbReference>
<dbReference type="FunFam" id="3.40.50.300:FF:000408">
    <property type="entry name" value="Shikimate kinase 2"/>
    <property type="match status" value="1"/>
</dbReference>
<dbReference type="Gene3D" id="3.40.50.300">
    <property type="entry name" value="P-loop containing nucleotide triphosphate hydrolases"/>
    <property type="match status" value="1"/>
</dbReference>
<dbReference type="HAMAP" id="MF_00109">
    <property type="entry name" value="Shikimate_kinase"/>
    <property type="match status" value="1"/>
</dbReference>
<dbReference type="HAMAP" id="MF_01269">
    <property type="entry name" value="Shikimate_kinase_2"/>
    <property type="match status" value="1"/>
</dbReference>
<dbReference type="InterPro" id="IPR027417">
    <property type="entry name" value="P-loop_NTPase"/>
</dbReference>
<dbReference type="InterPro" id="IPR031322">
    <property type="entry name" value="Shikimate/glucono_kinase"/>
</dbReference>
<dbReference type="InterPro" id="IPR000623">
    <property type="entry name" value="Shikimate_kinase/TSH1"/>
</dbReference>
<dbReference type="InterPro" id="IPR027544">
    <property type="entry name" value="Shikimate_kinase_2"/>
</dbReference>
<dbReference type="InterPro" id="IPR023000">
    <property type="entry name" value="Shikimate_kinase_CS"/>
</dbReference>
<dbReference type="NCBIfam" id="NF002988">
    <property type="entry name" value="PRK03731.1"/>
    <property type="match status" value="1"/>
</dbReference>
<dbReference type="PANTHER" id="PTHR21087">
    <property type="entry name" value="SHIKIMATE KINASE"/>
    <property type="match status" value="1"/>
</dbReference>
<dbReference type="PANTHER" id="PTHR21087:SF21">
    <property type="entry name" value="SHIKIMATE KINASE 2"/>
    <property type="match status" value="1"/>
</dbReference>
<dbReference type="Pfam" id="PF01202">
    <property type="entry name" value="SKI"/>
    <property type="match status" value="1"/>
</dbReference>
<dbReference type="PRINTS" id="PR01100">
    <property type="entry name" value="SHIKIMTKNASE"/>
</dbReference>
<dbReference type="SUPFAM" id="SSF52540">
    <property type="entry name" value="P-loop containing nucleoside triphosphate hydrolases"/>
    <property type="match status" value="1"/>
</dbReference>
<dbReference type="PROSITE" id="PS01128">
    <property type="entry name" value="SHIKIMATE_KINASE"/>
    <property type="match status" value="1"/>
</dbReference>
<keyword id="KW-0028">Amino-acid biosynthesis</keyword>
<keyword id="KW-0057">Aromatic amino acid biosynthesis</keyword>
<keyword id="KW-0067">ATP-binding</keyword>
<keyword id="KW-0963">Cytoplasm</keyword>
<keyword id="KW-0418">Kinase</keyword>
<keyword id="KW-0460">Magnesium</keyword>
<keyword id="KW-0479">Metal-binding</keyword>
<keyword id="KW-0547">Nucleotide-binding</keyword>
<keyword id="KW-0808">Transferase</keyword>
<reference key="1">
    <citation type="submission" date="2008-02" db="EMBL/GenBank/DDBJ databases">
        <title>Complete sequence of Escherichia coli C str. ATCC 8739.</title>
        <authorList>
            <person name="Copeland A."/>
            <person name="Lucas S."/>
            <person name="Lapidus A."/>
            <person name="Glavina del Rio T."/>
            <person name="Dalin E."/>
            <person name="Tice H."/>
            <person name="Bruce D."/>
            <person name="Goodwin L."/>
            <person name="Pitluck S."/>
            <person name="Kiss H."/>
            <person name="Brettin T."/>
            <person name="Detter J.C."/>
            <person name="Han C."/>
            <person name="Kuske C.R."/>
            <person name="Schmutz J."/>
            <person name="Larimer F."/>
            <person name="Land M."/>
            <person name="Hauser L."/>
            <person name="Kyrpides N."/>
            <person name="Mikhailova N."/>
            <person name="Ingram L."/>
            <person name="Richardson P."/>
        </authorList>
    </citation>
    <scope>NUCLEOTIDE SEQUENCE [LARGE SCALE GENOMIC DNA]</scope>
    <source>
        <strain>ATCC 8739 / DSM 1576 / NBRC 3972 / NCIMB 8545 / WDCM 00012 / Crooks</strain>
    </source>
</reference>
<protein>
    <recommendedName>
        <fullName evidence="1">Shikimate kinase 2</fullName>
        <shortName evidence="1">SK 2</shortName>
        <ecNumber evidence="1">2.7.1.71</ecNumber>
    </recommendedName>
</protein>
<sequence>MTQPLFLIGPRGCGKTTVGMALADSLNRRFVDTDQWLQSQLNMTVAEIVEREEWAGFRARETAALEAVTAPSTVIATGGGIILTEFNRHFMQNNGIVVYLCAPVSVLVNRLQAAPEEDLRPTLTGKPLSEEVQEVLEERDALYREVAHIIIDATNEPSQVISEIRSALAQTINC</sequence>
<evidence type="ECO:0000255" key="1">
    <source>
        <dbReference type="HAMAP-Rule" id="MF_01269"/>
    </source>
</evidence>